<evidence type="ECO:0000255" key="1">
    <source>
        <dbReference type="HAMAP-Rule" id="MF_00770"/>
    </source>
</evidence>
<gene>
    <name evidence="1" type="primary">rhaD</name>
    <name type="ordered locus">SeD_A4440</name>
</gene>
<protein>
    <recommendedName>
        <fullName evidence="1">Rhamnulose-1-phosphate aldolase</fullName>
        <ecNumber evidence="1">4.1.2.19</ecNumber>
    </recommendedName>
</protein>
<comment type="function">
    <text evidence="1">Catalyzes the reversible cleavage of L-rhamnulose-1-phosphate to dihydroxyacetone phosphate (DHAP) and L-lactaldehyde.</text>
</comment>
<comment type="catalytic activity">
    <reaction evidence="1">
        <text>L-rhamnulose 1-phosphate = (S)-lactaldehyde + dihydroxyacetone phosphate</text>
        <dbReference type="Rhea" id="RHEA:19689"/>
        <dbReference type="ChEBI" id="CHEBI:18041"/>
        <dbReference type="ChEBI" id="CHEBI:57642"/>
        <dbReference type="ChEBI" id="CHEBI:58313"/>
        <dbReference type="EC" id="4.1.2.19"/>
    </reaction>
</comment>
<comment type="cofactor">
    <cofactor evidence="1">
        <name>Zn(2+)</name>
        <dbReference type="ChEBI" id="CHEBI:29105"/>
    </cofactor>
    <text evidence="1">Binds 1 zinc ion per subunit.</text>
</comment>
<comment type="pathway">
    <text evidence="1">Carbohydrate degradation; L-rhamnose degradation; glycerone phosphate from L-rhamnose: step 3/3.</text>
</comment>
<comment type="subunit">
    <text evidence="1">Homotetramer.</text>
</comment>
<comment type="subcellular location">
    <subcellularLocation>
        <location evidence="1">Cytoplasm</location>
    </subcellularLocation>
</comment>
<comment type="similarity">
    <text evidence="1">Belongs to the aldolase class II family. RhaD subfamily.</text>
</comment>
<feature type="chain" id="PRO_1000193732" description="Rhamnulose-1-phosphate aldolase">
    <location>
        <begin position="1"/>
        <end position="275"/>
    </location>
</feature>
<feature type="active site" evidence="1">
    <location>
        <position position="117"/>
    </location>
</feature>
<feature type="binding site" evidence="1">
    <location>
        <position position="141"/>
    </location>
    <ligand>
        <name>Zn(2+)</name>
        <dbReference type="ChEBI" id="CHEBI:29105"/>
    </ligand>
</feature>
<feature type="binding site" evidence="1">
    <location>
        <position position="143"/>
    </location>
    <ligand>
        <name>Zn(2+)</name>
        <dbReference type="ChEBI" id="CHEBI:29105"/>
    </ligand>
</feature>
<feature type="binding site" evidence="1">
    <location>
        <position position="212"/>
    </location>
    <ligand>
        <name>Zn(2+)</name>
        <dbReference type="ChEBI" id="CHEBI:29105"/>
    </ligand>
</feature>
<proteinExistence type="inferred from homology"/>
<dbReference type="EC" id="4.1.2.19" evidence="1"/>
<dbReference type="EMBL" id="CP001144">
    <property type="protein sequence ID" value="ACH75805.1"/>
    <property type="molecule type" value="Genomic_DNA"/>
</dbReference>
<dbReference type="RefSeq" id="WP_001179690.1">
    <property type="nucleotide sequence ID" value="NC_011205.1"/>
</dbReference>
<dbReference type="SMR" id="B5FP38"/>
<dbReference type="KEGG" id="sed:SeD_A4440"/>
<dbReference type="HOGENOM" id="CLU_076831_0_0_6"/>
<dbReference type="UniPathway" id="UPA00541">
    <property type="reaction ID" value="UER00603"/>
</dbReference>
<dbReference type="Proteomes" id="UP000008322">
    <property type="component" value="Chromosome"/>
</dbReference>
<dbReference type="GO" id="GO:0005829">
    <property type="term" value="C:cytosol"/>
    <property type="evidence" value="ECO:0007669"/>
    <property type="project" value="TreeGrafter"/>
</dbReference>
<dbReference type="GO" id="GO:0046872">
    <property type="term" value="F:metal ion binding"/>
    <property type="evidence" value="ECO:0007669"/>
    <property type="project" value="UniProtKB-KW"/>
</dbReference>
<dbReference type="GO" id="GO:0008994">
    <property type="term" value="F:rhamnulose-1-phosphate aldolase activity"/>
    <property type="evidence" value="ECO:0007669"/>
    <property type="project" value="UniProtKB-UniRule"/>
</dbReference>
<dbReference type="GO" id="GO:0019323">
    <property type="term" value="P:pentose catabolic process"/>
    <property type="evidence" value="ECO:0007669"/>
    <property type="project" value="TreeGrafter"/>
</dbReference>
<dbReference type="GO" id="GO:0019301">
    <property type="term" value="P:rhamnose catabolic process"/>
    <property type="evidence" value="ECO:0007669"/>
    <property type="project" value="UniProtKB-UniRule"/>
</dbReference>
<dbReference type="CDD" id="cd00398">
    <property type="entry name" value="Aldolase_II"/>
    <property type="match status" value="1"/>
</dbReference>
<dbReference type="FunFam" id="3.40.225.10:FF:000006">
    <property type="entry name" value="Rhamnulose-1-phosphate aldolase"/>
    <property type="match status" value="1"/>
</dbReference>
<dbReference type="Gene3D" id="3.40.225.10">
    <property type="entry name" value="Class II aldolase/adducin N-terminal domain"/>
    <property type="match status" value="1"/>
</dbReference>
<dbReference type="HAMAP" id="MF_00770">
    <property type="entry name" value="RhaD"/>
    <property type="match status" value="1"/>
</dbReference>
<dbReference type="InterPro" id="IPR050197">
    <property type="entry name" value="Aldolase_class_II_sugar_metab"/>
</dbReference>
<dbReference type="InterPro" id="IPR001303">
    <property type="entry name" value="Aldolase_II/adducin_N"/>
</dbReference>
<dbReference type="InterPro" id="IPR036409">
    <property type="entry name" value="Aldolase_II/adducin_N_sf"/>
</dbReference>
<dbReference type="InterPro" id="IPR013447">
    <property type="entry name" value="Rhamnulose-1-P_Aldolase"/>
</dbReference>
<dbReference type="NCBIfam" id="NF002963">
    <property type="entry name" value="PRK03634.1"/>
    <property type="match status" value="1"/>
</dbReference>
<dbReference type="NCBIfam" id="TIGR02624">
    <property type="entry name" value="rhamnu_1P_ald"/>
    <property type="match status" value="1"/>
</dbReference>
<dbReference type="PANTHER" id="PTHR22789">
    <property type="entry name" value="FUCULOSE PHOSPHATE ALDOLASE"/>
    <property type="match status" value="1"/>
</dbReference>
<dbReference type="PANTHER" id="PTHR22789:SF16">
    <property type="entry name" value="RHAMNULOSE-1-PHOSPHATE ALDOLASE"/>
    <property type="match status" value="1"/>
</dbReference>
<dbReference type="Pfam" id="PF00596">
    <property type="entry name" value="Aldolase_II"/>
    <property type="match status" value="1"/>
</dbReference>
<dbReference type="SMART" id="SM01007">
    <property type="entry name" value="Aldolase_II"/>
    <property type="match status" value="1"/>
</dbReference>
<dbReference type="SUPFAM" id="SSF53639">
    <property type="entry name" value="AraD/HMP-PK domain-like"/>
    <property type="match status" value="1"/>
</dbReference>
<organism>
    <name type="scientific">Salmonella dublin (strain CT_02021853)</name>
    <dbReference type="NCBI Taxonomy" id="439851"/>
    <lineage>
        <taxon>Bacteria</taxon>
        <taxon>Pseudomonadati</taxon>
        <taxon>Pseudomonadota</taxon>
        <taxon>Gammaproteobacteria</taxon>
        <taxon>Enterobacterales</taxon>
        <taxon>Enterobacteriaceae</taxon>
        <taxon>Salmonella</taxon>
    </lineage>
</organism>
<keyword id="KW-0963">Cytoplasm</keyword>
<keyword id="KW-0456">Lyase</keyword>
<keyword id="KW-0479">Metal-binding</keyword>
<keyword id="KW-0684">Rhamnose metabolism</keyword>
<keyword id="KW-0862">Zinc</keyword>
<reference key="1">
    <citation type="journal article" date="2011" name="J. Bacteriol.">
        <title>Comparative genomics of 28 Salmonella enterica isolates: evidence for CRISPR-mediated adaptive sublineage evolution.</title>
        <authorList>
            <person name="Fricke W.F."/>
            <person name="Mammel M.K."/>
            <person name="McDermott P.F."/>
            <person name="Tartera C."/>
            <person name="White D.G."/>
            <person name="Leclerc J.E."/>
            <person name="Ravel J."/>
            <person name="Cebula T.A."/>
        </authorList>
    </citation>
    <scope>NUCLEOTIDE SEQUENCE [LARGE SCALE GENOMIC DNA]</scope>
    <source>
        <strain>CT_02021853</strain>
    </source>
</reference>
<sequence>MQNITDSWFVQGMIKATSDAWLKGWDERNGGNLTLRLDEADIAPFATNFHEKPRYIALSQPMPLLANTPFIVTGSGKFFRNVQLDPAANLGVVKIDSDGAGYHILWGLTHDAVPTSELPAHFLSHCERIKATHGKDRVIMHCHATNLIALTYVLENNTALITRKLWEGSTECLVVFPDGVGILPWMVPGTDEIGQATAQEMQKHSLVLWPFHGVFGSGPTLDETFGLIDTAEKSAEVLVKIYSMGGMKQTITREELVALGKRFGVTPLASAVALY</sequence>
<accession>B5FP38</accession>
<name>RHAD_SALDC</name>